<sequence>MMADPLIPWLTEHGLVCHPHTLSGTPISLGSAFQLAGLKLAWRVEIEQRRVWIVLIQRVEQRRGLKNPFAALYMLANAARAVLGPDYYLYGNVDVLAGSSLSTQRLAHFYRRWTGAKELSTGWFSLKVSQVITLSNMKKRQNNGFA</sequence>
<accession>P69960</accession>
<accession>P19393</accession>
<accession>P31488</accession>
<accession>Q663K7</accession>
<organism>
    <name type="scientific">Yersinia pseudotuberculosis serotype I (strain IP32953)</name>
    <dbReference type="NCBI Taxonomy" id="273123"/>
    <lineage>
        <taxon>Bacteria</taxon>
        <taxon>Pseudomonadati</taxon>
        <taxon>Pseudomonadota</taxon>
        <taxon>Gammaproteobacteria</taxon>
        <taxon>Enterobacterales</taxon>
        <taxon>Yersiniaceae</taxon>
        <taxon>Yersinia</taxon>
    </lineage>
</organism>
<name>LCRR_YERPS</name>
<keyword id="KW-0106">Calcium</keyword>
<keyword id="KW-0614">Plasmid</keyword>
<feature type="chain" id="PRO_0000084375" description="Low calcium response locus protein R">
    <location>
        <begin position="1"/>
        <end position="146"/>
    </location>
</feature>
<protein>
    <recommendedName>
        <fullName>Low calcium response locus protein R</fullName>
    </recommendedName>
</protein>
<gene>
    <name type="primary">lcrR</name>
    <name type="ordered locus">pYV0059</name>
</gene>
<geneLocation type="plasmid">
    <name>pIB1</name>
</geneLocation>
<geneLocation type="plasmid">
    <name>pYV</name>
</geneLocation>
<dbReference type="EMBL" id="M96850">
    <property type="protein sequence ID" value="AAA27648.1"/>
    <property type="molecule type" value="Genomic_DNA"/>
</dbReference>
<dbReference type="EMBL" id="BX936399">
    <property type="protein sequence ID" value="CAF25402.1"/>
    <property type="molecule type" value="Genomic_DNA"/>
</dbReference>
<dbReference type="EMBL" id="M57893">
    <property type="status" value="NOT_ANNOTATED_CDS"/>
    <property type="molecule type" value="Genomic_DNA"/>
</dbReference>
<dbReference type="PIR" id="D37314">
    <property type="entry name" value="D37314"/>
</dbReference>
<dbReference type="RefSeq" id="WP_002220918.1">
    <property type="nucleotide sequence ID" value="NZ_CP009711.1"/>
</dbReference>
<dbReference type="KEGG" id="ypo:BZ17_4274"/>
<dbReference type="KEGG" id="yps:pYV0059"/>
<dbReference type="PATRIC" id="fig|273123.14.peg.4510"/>
<dbReference type="Proteomes" id="UP000001011">
    <property type="component" value="Plasmid pYV"/>
</dbReference>
<dbReference type="InterPro" id="IPR022797">
    <property type="entry name" value="LcrR/CesD2"/>
</dbReference>
<dbReference type="InterPro" id="IPR013405">
    <property type="entry name" value="T3SS_LcrR"/>
</dbReference>
<dbReference type="NCBIfam" id="TIGR02572">
    <property type="entry name" value="LcrR"/>
    <property type="match status" value="1"/>
</dbReference>
<dbReference type="Pfam" id="PF09621">
    <property type="entry name" value="LcrR"/>
    <property type="match status" value="1"/>
</dbReference>
<reference key="1">
    <citation type="submission" date="1992-11" db="EMBL/GenBank/DDBJ databases">
        <title>The LcrD protein of Yersinia pseudotuberculosis belongs to a novel protein family involved in surface presentation of virulence determinants.</title>
        <authorList>
            <person name="Bergman T."/>
            <person name="Forsberg A."/>
            <person name="Backman A."/>
            <person name="Wolf-Watz H."/>
        </authorList>
    </citation>
    <scope>NUCLEOTIDE SEQUENCE [GENOMIC DNA]</scope>
    <source>
        <strain>YPIII / Serotype O:3</strain>
        <plasmid>pIB1</plasmid>
    </source>
</reference>
<reference key="2">
    <citation type="journal article" date="2004" name="Proc. Natl. Acad. Sci. U.S.A.">
        <title>Insights into the evolution of Yersinia pestis through whole-genome comparison with Yersinia pseudotuberculosis.</title>
        <authorList>
            <person name="Chain P.S.G."/>
            <person name="Carniel E."/>
            <person name="Larimer F.W."/>
            <person name="Lamerdin J."/>
            <person name="Stoutland P.O."/>
            <person name="Regala W.M."/>
            <person name="Georgescu A.M."/>
            <person name="Vergez L.M."/>
            <person name="Land M.L."/>
            <person name="Motin V.L."/>
            <person name="Brubaker R.R."/>
            <person name="Fowler J."/>
            <person name="Hinnebusch J."/>
            <person name="Marceau M."/>
            <person name="Medigue C."/>
            <person name="Simonet M."/>
            <person name="Chenal-Francisque V."/>
            <person name="Souza B."/>
            <person name="Dacheux D."/>
            <person name="Elliott J.M."/>
            <person name="Derbise A."/>
            <person name="Hauser L.J."/>
            <person name="Garcia E."/>
        </authorList>
    </citation>
    <scope>NUCLEOTIDE SEQUENCE [LARGE SCALE GENOMIC DNA]</scope>
    <source>
        <strain>IP32953</strain>
        <plasmid>pYV</plasmid>
    </source>
</reference>
<reference key="3">
    <citation type="journal article" date="1991" name="J. Bacteriol.">
        <title>Analysis of the V antigen lcrGVH-yopBD operon of Yersinia pseudotuberculosis: evidence for a regulatory role of LcrH and LcrV.</title>
        <authorList>
            <person name="Bergman T."/>
            <person name="Haakansson S."/>
            <person name="Forsberg A."/>
            <person name="Norlander L."/>
            <person name="Macellaro A."/>
            <person name="Baeckman A."/>
            <person name="Boelin I."/>
            <person name="Wolf-Watz H."/>
        </authorList>
    </citation>
    <scope>NUCLEOTIDE SEQUENCE [GENOMIC DNA] OF 88-146</scope>
    <source>
        <strain>YPIII / Serotype O:3</strain>
        <plasmid>pIB1</plasmid>
    </source>
</reference>
<comment type="function">
    <text>Involved in the down-regulation of lcrGVH transcription in the presence or absence of calcium and is necessary for lcrG protein expression in the absence of calcium. Plays an important role in the regulation of the low-calcium response.</text>
</comment>
<proteinExistence type="predicted"/>